<name>ISPH_GEODF</name>
<accession>B9LZG4</accession>
<comment type="function">
    <text evidence="1">Catalyzes the conversion of 1-hydroxy-2-methyl-2-(E)-butenyl 4-diphosphate (HMBPP) into a mixture of isopentenyl diphosphate (IPP) and dimethylallyl diphosphate (DMAPP). Acts in the terminal step of the DOXP/MEP pathway for isoprenoid precursor biosynthesis.</text>
</comment>
<comment type="catalytic activity">
    <reaction evidence="1">
        <text>isopentenyl diphosphate + 2 oxidized [2Fe-2S]-[ferredoxin] + H2O = (2E)-4-hydroxy-3-methylbut-2-enyl diphosphate + 2 reduced [2Fe-2S]-[ferredoxin] + 2 H(+)</text>
        <dbReference type="Rhea" id="RHEA:24488"/>
        <dbReference type="Rhea" id="RHEA-COMP:10000"/>
        <dbReference type="Rhea" id="RHEA-COMP:10001"/>
        <dbReference type="ChEBI" id="CHEBI:15377"/>
        <dbReference type="ChEBI" id="CHEBI:15378"/>
        <dbReference type="ChEBI" id="CHEBI:33737"/>
        <dbReference type="ChEBI" id="CHEBI:33738"/>
        <dbReference type="ChEBI" id="CHEBI:128753"/>
        <dbReference type="ChEBI" id="CHEBI:128769"/>
        <dbReference type="EC" id="1.17.7.4"/>
    </reaction>
</comment>
<comment type="catalytic activity">
    <reaction evidence="1">
        <text>dimethylallyl diphosphate + 2 oxidized [2Fe-2S]-[ferredoxin] + H2O = (2E)-4-hydroxy-3-methylbut-2-enyl diphosphate + 2 reduced [2Fe-2S]-[ferredoxin] + 2 H(+)</text>
        <dbReference type="Rhea" id="RHEA:24825"/>
        <dbReference type="Rhea" id="RHEA-COMP:10000"/>
        <dbReference type="Rhea" id="RHEA-COMP:10001"/>
        <dbReference type="ChEBI" id="CHEBI:15377"/>
        <dbReference type="ChEBI" id="CHEBI:15378"/>
        <dbReference type="ChEBI" id="CHEBI:33737"/>
        <dbReference type="ChEBI" id="CHEBI:33738"/>
        <dbReference type="ChEBI" id="CHEBI:57623"/>
        <dbReference type="ChEBI" id="CHEBI:128753"/>
        <dbReference type="EC" id="1.17.7.4"/>
    </reaction>
</comment>
<comment type="cofactor">
    <cofactor evidence="1">
        <name>[4Fe-4S] cluster</name>
        <dbReference type="ChEBI" id="CHEBI:49883"/>
    </cofactor>
    <text evidence="1">Binds 1 [4Fe-4S] cluster per subunit.</text>
</comment>
<comment type="pathway">
    <text evidence="1">Isoprenoid biosynthesis; dimethylallyl diphosphate biosynthesis; dimethylallyl diphosphate from (2E)-4-hydroxy-3-methylbutenyl diphosphate: step 1/1.</text>
</comment>
<comment type="pathway">
    <text evidence="1">Isoprenoid biosynthesis; isopentenyl diphosphate biosynthesis via DXP pathway; isopentenyl diphosphate from 1-deoxy-D-xylulose 5-phosphate: step 6/6.</text>
</comment>
<comment type="similarity">
    <text evidence="1">Belongs to the IspH family.</text>
</comment>
<feature type="chain" id="PRO_1000124286" description="4-hydroxy-3-methylbut-2-enyl diphosphate reductase">
    <location>
        <begin position="1"/>
        <end position="282"/>
    </location>
</feature>
<feature type="active site" description="Proton donor" evidence="1">
    <location>
        <position position="124"/>
    </location>
</feature>
<feature type="binding site" evidence="1">
    <location>
        <position position="12"/>
    </location>
    <ligand>
        <name>[4Fe-4S] cluster</name>
        <dbReference type="ChEBI" id="CHEBI:49883"/>
    </ligand>
</feature>
<feature type="binding site" evidence="1">
    <location>
        <position position="40"/>
    </location>
    <ligand>
        <name>(2E)-4-hydroxy-3-methylbut-2-enyl diphosphate</name>
        <dbReference type="ChEBI" id="CHEBI:128753"/>
    </ligand>
</feature>
<feature type="binding site" evidence="1">
    <location>
        <position position="40"/>
    </location>
    <ligand>
        <name>dimethylallyl diphosphate</name>
        <dbReference type="ChEBI" id="CHEBI:57623"/>
    </ligand>
</feature>
<feature type="binding site" evidence="1">
    <location>
        <position position="40"/>
    </location>
    <ligand>
        <name>isopentenyl diphosphate</name>
        <dbReference type="ChEBI" id="CHEBI:128769"/>
    </ligand>
</feature>
<feature type="binding site" evidence="1">
    <location>
        <position position="72"/>
    </location>
    <ligand>
        <name>(2E)-4-hydroxy-3-methylbut-2-enyl diphosphate</name>
        <dbReference type="ChEBI" id="CHEBI:128753"/>
    </ligand>
</feature>
<feature type="binding site" evidence="1">
    <location>
        <position position="72"/>
    </location>
    <ligand>
        <name>dimethylallyl diphosphate</name>
        <dbReference type="ChEBI" id="CHEBI:57623"/>
    </ligand>
</feature>
<feature type="binding site" evidence="1">
    <location>
        <position position="72"/>
    </location>
    <ligand>
        <name>isopentenyl diphosphate</name>
        <dbReference type="ChEBI" id="CHEBI:128769"/>
    </ligand>
</feature>
<feature type="binding site" evidence="1">
    <location>
        <position position="94"/>
    </location>
    <ligand>
        <name>[4Fe-4S] cluster</name>
        <dbReference type="ChEBI" id="CHEBI:49883"/>
    </ligand>
</feature>
<feature type="binding site" evidence="1">
    <location>
        <position position="122"/>
    </location>
    <ligand>
        <name>(2E)-4-hydroxy-3-methylbut-2-enyl diphosphate</name>
        <dbReference type="ChEBI" id="CHEBI:128753"/>
    </ligand>
</feature>
<feature type="binding site" evidence="1">
    <location>
        <position position="122"/>
    </location>
    <ligand>
        <name>dimethylallyl diphosphate</name>
        <dbReference type="ChEBI" id="CHEBI:57623"/>
    </ligand>
</feature>
<feature type="binding site" evidence="1">
    <location>
        <position position="122"/>
    </location>
    <ligand>
        <name>isopentenyl diphosphate</name>
        <dbReference type="ChEBI" id="CHEBI:128769"/>
    </ligand>
</feature>
<feature type="binding site" evidence="1">
    <location>
        <position position="160"/>
    </location>
    <ligand>
        <name>(2E)-4-hydroxy-3-methylbut-2-enyl diphosphate</name>
        <dbReference type="ChEBI" id="CHEBI:128753"/>
    </ligand>
</feature>
<feature type="binding site" evidence="1">
    <location>
        <position position="188"/>
    </location>
    <ligand>
        <name>[4Fe-4S] cluster</name>
        <dbReference type="ChEBI" id="CHEBI:49883"/>
    </ligand>
</feature>
<feature type="binding site" evidence="1">
    <location>
        <position position="216"/>
    </location>
    <ligand>
        <name>(2E)-4-hydroxy-3-methylbut-2-enyl diphosphate</name>
        <dbReference type="ChEBI" id="CHEBI:128753"/>
    </ligand>
</feature>
<feature type="binding site" evidence="1">
    <location>
        <position position="216"/>
    </location>
    <ligand>
        <name>dimethylallyl diphosphate</name>
        <dbReference type="ChEBI" id="CHEBI:57623"/>
    </ligand>
</feature>
<feature type="binding site" evidence="1">
    <location>
        <position position="216"/>
    </location>
    <ligand>
        <name>isopentenyl diphosphate</name>
        <dbReference type="ChEBI" id="CHEBI:128769"/>
    </ligand>
</feature>
<feature type="binding site" evidence="1">
    <location>
        <position position="218"/>
    </location>
    <ligand>
        <name>(2E)-4-hydroxy-3-methylbut-2-enyl diphosphate</name>
        <dbReference type="ChEBI" id="CHEBI:128753"/>
    </ligand>
</feature>
<feature type="binding site" evidence="1">
    <location>
        <position position="218"/>
    </location>
    <ligand>
        <name>dimethylallyl diphosphate</name>
        <dbReference type="ChEBI" id="CHEBI:57623"/>
    </ligand>
</feature>
<feature type="binding site" evidence="1">
    <location>
        <position position="218"/>
    </location>
    <ligand>
        <name>isopentenyl diphosphate</name>
        <dbReference type="ChEBI" id="CHEBI:128769"/>
    </ligand>
</feature>
<feature type="binding site" evidence="1">
    <location>
        <position position="260"/>
    </location>
    <ligand>
        <name>(2E)-4-hydroxy-3-methylbut-2-enyl diphosphate</name>
        <dbReference type="ChEBI" id="CHEBI:128753"/>
    </ligand>
</feature>
<feature type="binding site" evidence="1">
    <location>
        <position position="260"/>
    </location>
    <ligand>
        <name>dimethylallyl diphosphate</name>
        <dbReference type="ChEBI" id="CHEBI:57623"/>
    </ligand>
</feature>
<feature type="binding site" evidence="1">
    <location>
        <position position="260"/>
    </location>
    <ligand>
        <name>isopentenyl diphosphate</name>
        <dbReference type="ChEBI" id="CHEBI:128769"/>
    </ligand>
</feature>
<dbReference type="EC" id="1.17.7.4" evidence="1"/>
<dbReference type="EMBL" id="CP001390">
    <property type="protein sequence ID" value="ACM20717.1"/>
    <property type="molecule type" value="Genomic_DNA"/>
</dbReference>
<dbReference type="RefSeq" id="WP_012647446.1">
    <property type="nucleotide sequence ID" value="NC_011979.1"/>
</dbReference>
<dbReference type="SMR" id="B9LZG4"/>
<dbReference type="STRING" id="316067.Geob_2363"/>
<dbReference type="KEGG" id="geo:Geob_2363"/>
<dbReference type="eggNOG" id="COG0761">
    <property type="taxonomic scope" value="Bacteria"/>
</dbReference>
<dbReference type="HOGENOM" id="CLU_027486_0_1_7"/>
<dbReference type="OrthoDB" id="9804068at2"/>
<dbReference type="UniPathway" id="UPA00056">
    <property type="reaction ID" value="UER00097"/>
</dbReference>
<dbReference type="UniPathway" id="UPA00059">
    <property type="reaction ID" value="UER00105"/>
</dbReference>
<dbReference type="Proteomes" id="UP000007721">
    <property type="component" value="Chromosome"/>
</dbReference>
<dbReference type="GO" id="GO:0051539">
    <property type="term" value="F:4 iron, 4 sulfur cluster binding"/>
    <property type="evidence" value="ECO:0007669"/>
    <property type="project" value="UniProtKB-UniRule"/>
</dbReference>
<dbReference type="GO" id="GO:0051745">
    <property type="term" value="F:4-hydroxy-3-methylbut-2-enyl diphosphate reductase activity"/>
    <property type="evidence" value="ECO:0007669"/>
    <property type="project" value="UniProtKB-UniRule"/>
</dbReference>
<dbReference type="GO" id="GO:0046872">
    <property type="term" value="F:metal ion binding"/>
    <property type="evidence" value="ECO:0007669"/>
    <property type="project" value="UniProtKB-KW"/>
</dbReference>
<dbReference type="GO" id="GO:0050992">
    <property type="term" value="P:dimethylallyl diphosphate biosynthetic process"/>
    <property type="evidence" value="ECO:0007669"/>
    <property type="project" value="UniProtKB-UniRule"/>
</dbReference>
<dbReference type="GO" id="GO:0019288">
    <property type="term" value="P:isopentenyl diphosphate biosynthetic process, methylerythritol 4-phosphate pathway"/>
    <property type="evidence" value="ECO:0007669"/>
    <property type="project" value="UniProtKB-UniRule"/>
</dbReference>
<dbReference type="GO" id="GO:0016114">
    <property type="term" value="P:terpenoid biosynthetic process"/>
    <property type="evidence" value="ECO:0007669"/>
    <property type="project" value="UniProtKB-UniRule"/>
</dbReference>
<dbReference type="CDD" id="cd13944">
    <property type="entry name" value="lytB_ispH"/>
    <property type="match status" value="1"/>
</dbReference>
<dbReference type="Gene3D" id="3.40.50.11270">
    <property type="match status" value="1"/>
</dbReference>
<dbReference type="Gene3D" id="3.40.1010.20">
    <property type="entry name" value="4-hydroxy-3-methylbut-2-enyl diphosphate reductase, catalytic domain"/>
    <property type="match status" value="2"/>
</dbReference>
<dbReference type="HAMAP" id="MF_00191">
    <property type="entry name" value="IspH"/>
    <property type="match status" value="1"/>
</dbReference>
<dbReference type="InterPro" id="IPR003451">
    <property type="entry name" value="LytB/IspH"/>
</dbReference>
<dbReference type="NCBIfam" id="TIGR00216">
    <property type="entry name" value="ispH_lytB"/>
    <property type="match status" value="1"/>
</dbReference>
<dbReference type="NCBIfam" id="NF002187">
    <property type="entry name" value="PRK01045.1-1"/>
    <property type="match status" value="1"/>
</dbReference>
<dbReference type="PANTHER" id="PTHR30426">
    <property type="entry name" value="4-HYDROXY-3-METHYLBUT-2-ENYL DIPHOSPHATE REDUCTASE"/>
    <property type="match status" value="1"/>
</dbReference>
<dbReference type="PANTHER" id="PTHR30426:SF0">
    <property type="entry name" value="4-HYDROXY-3-METHYLBUT-2-ENYL DIPHOSPHATE REDUCTASE"/>
    <property type="match status" value="1"/>
</dbReference>
<dbReference type="Pfam" id="PF02401">
    <property type="entry name" value="LYTB"/>
    <property type="match status" value="1"/>
</dbReference>
<sequence>MKIILAKQAGFCFGVKRATQIAFEAAGKGGKTFTLGPIIHSPQVVQKLEEMGVKALENVAGMDEGTIIIRSHGAASDELEEAVRKQLDILDATCPFVKKAQEHVKNLSNSGYDVVVVGDADHPEVQGIVSYATGKVYVVASGEEAVKLPKMGKIGVVAQTTQSFENLRHVVDACLVKGGEIRVFHTICDATAVRQEEAKKLASQVDCMVVIGGYNSANTKRLAEVSAEIQPRTHHIEMAQQLDPAWFEGVKIVGITAGASTPKWIIDEVLEQIESIAKDKNR</sequence>
<evidence type="ECO:0000255" key="1">
    <source>
        <dbReference type="HAMAP-Rule" id="MF_00191"/>
    </source>
</evidence>
<organism>
    <name type="scientific">Geotalea daltonii (strain DSM 22248 / JCM 15807 / FRC-32)</name>
    <name type="common">Geobacter daltonii</name>
    <dbReference type="NCBI Taxonomy" id="316067"/>
    <lineage>
        <taxon>Bacteria</taxon>
        <taxon>Pseudomonadati</taxon>
        <taxon>Thermodesulfobacteriota</taxon>
        <taxon>Desulfuromonadia</taxon>
        <taxon>Geobacterales</taxon>
        <taxon>Geobacteraceae</taxon>
        <taxon>Geotalea</taxon>
    </lineage>
</organism>
<gene>
    <name evidence="1" type="primary">ispH</name>
    <name type="ordered locus">Geob_2363</name>
</gene>
<keyword id="KW-0004">4Fe-4S</keyword>
<keyword id="KW-0408">Iron</keyword>
<keyword id="KW-0411">Iron-sulfur</keyword>
<keyword id="KW-0414">Isoprene biosynthesis</keyword>
<keyword id="KW-0479">Metal-binding</keyword>
<keyword id="KW-0560">Oxidoreductase</keyword>
<keyword id="KW-1185">Reference proteome</keyword>
<reference key="1">
    <citation type="submission" date="2009-01" db="EMBL/GenBank/DDBJ databases">
        <title>Complete sequence of Geobacter sp. FRC-32.</title>
        <authorList>
            <consortium name="US DOE Joint Genome Institute"/>
            <person name="Lucas S."/>
            <person name="Copeland A."/>
            <person name="Lapidus A."/>
            <person name="Glavina del Rio T."/>
            <person name="Dalin E."/>
            <person name="Tice H."/>
            <person name="Bruce D."/>
            <person name="Goodwin L."/>
            <person name="Pitluck S."/>
            <person name="Saunders E."/>
            <person name="Brettin T."/>
            <person name="Detter J.C."/>
            <person name="Han C."/>
            <person name="Larimer F."/>
            <person name="Land M."/>
            <person name="Hauser L."/>
            <person name="Kyrpides N."/>
            <person name="Ovchinnikova G."/>
            <person name="Kostka J."/>
            <person name="Richardson P."/>
        </authorList>
    </citation>
    <scope>NUCLEOTIDE SEQUENCE [LARGE SCALE GENOMIC DNA]</scope>
    <source>
        <strain>DSM 22248 / JCM 15807 / FRC-32</strain>
    </source>
</reference>
<proteinExistence type="inferred from homology"/>
<protein>
    <recommendedName>
        <fullName evidence="1">4-hydroxy-3-methylbut-2-enyl diphosphate reductase</fullName>
        <shortName evidence="1">HMBPP reductase</shortName>
        <ecNumber evidence="1">1.17.7.4</ecNumber>
    </recommendedName>
</protein>